<dbReference type="EC" id="2.7.1.130" evidence="1"/>
<dbReference type="EMBL" id="CP000948">
    <property type="protein sequence ID" value="ACB02115.1"/>
    <property type="molecule type" value="Genomic_DNA"/>
</dbReference>
<dbReference type="RefSeq" id="WP_000570544.1">
    <property type="nucleotide sequence ID" value="NC_010473.1"/>
</dbReference>
<dbReference type="SMR" id="B1X855"/>
<dbReference type="KEGG" id="ecd:ECDH10B_0985"/>
<dbReference type="HOGENOM" id="CLU_038816_2_0_6"/>
<dbReference type="UniPathway" id="UPA00359">
    <property type="reaction ID" value="UER00482"/>
</dbReference>
<dbReference type="GO" id="GO:0005886">
    <property type="term" value="C:plasma membrane"/>
    <property type="evidence" value="ECO:0007669"/>
    <property type="project" value="TreeGrafter"/>
</dbReference>
<dbReference type="GO" id="GO:0005524">
    <property type="term" value="F:ATP binding"/>
    <property type="evidence" value="ECO:0007669"/>
    <property type="project" value="UniProtKB-UniRule"/>
</dbReference>
<dbReference type="GO" id="GO:0009029">
    <property type="term" value="F:tetraacyldisaccharide 4'-kinase activity"/>
    <property type="evidence" value="ECO:0007669"/>
    <property type="project" value="UniProtKB-UniRule"/>
</dbReference>
<dbReference type="GO" id="GO:0009245">
    <property type="term" value="P:lipid A biosynthetic process"/>
    <property type="evidence" value="ECO:0007669"/>
    <property type="project" value="UniProtKB-UniRule"/>
</dbReference>
<dbReference type="GO" id="GO:0009244">
    <property type="term" value="P:lipopolysaccharide core region biosynthetic process"/>
    <property type="evidence" value="ECO:0007669"/>
    <property type="project" value="TreeGrafter"/>
</dbReference>
<dbReference type="HAMAP" id="MF_00409">
    <property type="entry name" value="LpxK"/>
    <property type="match status" value="1"/>
</dbReference>
<dbReference type="InterPro" id="IPR003758">
    <property type="entry name" value="LpxK"/>
</dbReference>
<dbReference type="InterPro" id="IPR027417">
    <property type="entry name" value="P-loop_NTPase"/>
</dbReference>
<dbReference type="NCBIfam" id="TIGR00682">
    <property type="entry name" value="lpxK"/>
    <property type="match status" value="1"/>
</dbReference>
<dbReference type="PANTHER" id="PTHR42724">
    <property type="entry name" value="TETRAACYLDISACCHARIDE 4'-KINASE"/>
    <property type="match status" value="1"/>
</dbReference>
<dbReference type="PANTHER" id="PTHR42724:SF1">
    <property type="entry name" value="TETRAACYLDISACCHARIDE 4'-KINASE, MITOCHONDRIAL-RELATED"/>
    <property type="match status" value="1"/>
</dbReference>
<dbReference type="Pfam" id="PF02606">
    <property type="entry name" value="LpxK"/>
    <property type="match status" value="1"/>
</dbReference>
<dbReference type="SUPFAM" id="SSF52540">
    <property type="entry name" value="P-loop containing nucleoside triphosphate hydrolases"/>
    <property type="match status" value="1"/>
</dbReference>
<proteinExistence type="inferred from homology"/>
<gene>
    <name evidence="1" type="primary">lpxK</name>
    <name type="ordered locus">ECDH10B_0985</name>
</gene>
<accession>B1X855</accession>
<sequence>MIEKIWSGESPLWRLLLPLSWLYGLVSGAIRLCYKLKLKRAWRAPVPVVVVGNLTAGGNGKTPVVVWLVEQLQQRGIRVGVVSRGYGGKAESYPLLLSADTTTAQAGDEPVLIYQRTDAPVAVSPVRSDAVKAILAQHPDVQIIVTDDGLQHYRLARNVEIVVIDGVRRFGNGWWLPAGPMRERAGRLKSVDAVIVNGGVPRSGEIPMHLLPGQAVNLRTGTRCDVAQLEHVVAMAGIGHPPRFFATLKMCGVQPEKCVPLADHQSLNHADVSALVSAGQTLVMTEKDAVKCRAFAEENWWYLPVDAQLSGDEPAKLLTQLTLLASGN</sequence>
<keyword id="KW-0067">ATP-binding</keyword>
<keyword id="KW-0418">Kinase</keyword>
<keyword id="KW-0441">Lipid A biosynthesis</keyword>
<keyword id="KW-0444">Lipid biosynthesis</keyword>
<keyword id="KW-0443">Lipid metabolism</keyword>
<keyword id="KW-0547">Nucleotide-binding</keyword>
<keyword id="KW-0808">Transferase</keyword>
<protein>
    <recommendedName>
        <fullName evidence="1">Tetraacyldisaccharide 4'-kinase</fullName>
        <ecNumber evidence="1">2.7.1.130</ecNumber>
    </recommendedName>
    <alternativeName>
        <fullName evidence="1">Lipid A 4'-kinase</fullName>
    </alternativeName>
</protein>
<name>LPXK_ECODH</name>
<feature type="chain" id="PRO_1000123708" description="Tetraacyldisaccharide 4'-kinase">
    <location>
        <begin position="1"/>
        <end position="328"/>
    </location>
</feature>
<feature type="binding site" evidence="1">
    <location>
        <begin position="55"/>
        <end position="62"/>
    </location>
    <ligand>
        <name>ATP</name>
        <dbReference type="ChEBI" id="CHEBI:30616"/>
    </ligand>
</feature>
<organism>
    <name type="scientific">Escherichia coli (strain K12 / DH10B)</name>
    <dbReference type="NCBI Taxonomy" id="316385"/>
    <lineage>
        <taxon>Bacteria</taxon>
        <taxon>Pseudomonadati</taxon>
        <taxon>Pseudomonadota</taxon>
        <taxon>Gammaproteobacteria</taxon>
        <taxon>Enterobacterales</taxon>
        <taxon>Enterobacteriaceae</taxon>
        <taxon>Escherichia</taxon>
    </lineage>
</organism>
<evidence type="ECO:0000255" key="1">
    <source>
        <dbReference type="HAMAP-Rule" id="MF_00409"/>
    </source>
</evidence>
<comment type="function">
    <text evidence="1">Transfers the gamma-phosphate of ATP to the 4'-position of a tetraacyldisaccharide 1-phosphate intermediate (termed DS-1-P) to form tetraacyldisaccharide 1,4'-bis-phosphate (lipid IVA).</text>
</comment>
<comment type="catalytic activity">
    <reaction evidence="1">
        <text>a lipid A disaccharide + ATP = a lipid IVA + ADP + H(+)</text>
        <dbReference type="Rhea" id="RHEA:67840"/>
        <dbReference type="ChEBI" id="CHEBI:15378"/>
        <dbReference type="ChEBI" id="CHEBI:30616"/>
        <dbReference type="ChEBI" id="CHEBI:176343"/>
        <dbReference type="ChEBI" id="CHEBI:176425"/>
        <dbReference type="ChEBI" id="CHEBI:456216"/>
        <dbReference type="EC" id="2.7.1.130"/>
    </reaction>
</comment>
<comment type="pathway">
    <text evidence="1">Glycolipid biosynthesis; lipid IV(A) biosynthesis; lipid IV(A) from (3R)-3-hydroxytetradecanoyl-[acyl-carrier-protein] and UDP-N-acetyl-alpha-D-glucosamine: step 6/6.</text>
</comment>
<comment type="similarity">
    <text evidence="1">Belongs to the LpxK family.</text>
</comment>
<reference key="1">
    <citation type="journal article" date="2008" name="J. Bacteriol.">
        <title>The complete genome sequence of Escherichia coli DH10B: insights into the biology of a laboratory workhorse.</title>
        <authorList>
            <person name="Durfee T."/>
            <person name="Nelson R."/>
            <person name="Baldwin S."/>
            <person name="Plunkett G. III"/>
            <person name="Burland V."/>
            <person name="Mau B."/>
            <person name="Petrosino J.F."/>
            <person name="Qin X."/>
            <person name="Muzny D.M."/>
            <person name="Ayele M."/>
            <person name="Gibbs R.A."/>
            <person name="Csorgo B."/>
            <person name="Posfai G."/>
            <person name="Weinstock G.M."/>
            <person name="Blattner F.R."/>
        </authorList>
    </citation>
    <scope>NUCLEOTIDE SEQUENCE [LARGE SCALE GENOMIC DNA]</scope>
    <source>
        <strain>K12 / DH10B</strain>
    </source>
</reference>